<sequence>MNPVKNQVPKVGFVSLGCPKALVDSERILTQLRVEGYDIVPSYDAADVVVVNTCGFIDSAVTESLDAIGEAMNANGKVIVTGCLGKRPEQIREAYPQVLAVSGPQDYQSVMEAVHAALPPRHDPFVDLVPDYGIKLTPRHYAYLKISEGCNHRCSFCIIPSMRGDLVSRPVDEVLCEAERLVRGGVKELLVVSQDTSAYGVDLKYAERPWRDRMYQTRMKALCEGLSELGVWTRLHYVYPYPHVDDVLPLMAEGKLLPYLDIPFQHASPRILKLMKRPGAVEKTLQRVQRWKAMCPEITVRSTFIVGFPGETDAEFESLLDFLDQAQLDRVGAFAYSPVDGASANALPDPVPEEVKQERLARFMAKQAEISALRLEAKIGSVQQCLVDLIEDDIAVARSRADAPEIDGLVHIQNGGELGLKVGDLVDVEITDSDEHDLFGDALPANVVPQQGRALNLQMV</sequence>
<organism>
    <name type="scientific">Xanthomonas oryzae pv. oryzae (strain PXO99A)</name>
    <dbReference type="NCBI Taxonomy" id="360094"/>
    <lineage>
        <taxon>Bacteria</taxon>
        <taxon>Pseudomonadati</taxon>
        <taxon>Pseudomonadota</taxon>
        <taxon>Gammaproteobacteria</taxon>
        <taxon>Lysobacterales</taxon>
        <taxon>Lysobacteraceae</taxon>
        <taxon>Xanthomonas</taxon>
    </lineage>
</organism>
<proteinExistence type="inferred from homology"/>
<keyword id="KW-0004">4Fe-4S</keyword>
<keyword id="KW-0963">Cytoplasm</keyword>
<keyword id="KW-0408">Iron</keyword>
<keyword id="KW-0411">Iron-sulfur</keyword>
<keyword id="KW-0479">Metal-binding</keyword>
<keyword id="KW-0949">S-adenosyl-L-methionine</keyword>
<keyword id="KW-0808">Transferase</keyword>
<reference key="1">
    <citation type="journal article" date="2008" name="BMC Genomics">
        <title>Genome sequence and rapid evolution of the rice pathogen Xanthomonas oryzae pv. oryzae PXO99A.</title>
        <authorList>
            <person name="Salzberg S.L."/>
            <person name="Sommer D.D."/>
            <person name="Schatz M.C."/>
            <person name="Phillippy A.M."/>
            <person name="Rabinowicz P.D."/>
            <person name="Tsuge S."/>
            <person name="Furutani A."/>
            <person name="Ochiai H."/>
            <person name="Delcher A.L."/>
            <person name="Kelley D."/>
            <person name="Madupu R."/>
            <person name="Puiu D."/>
            <person name="Radune D."/>
            <person name="Shumway M."/>
            <person name="Trapnell C."/>
            <person name="Aparna G."/>
            <person name="Jha G."/>
            <person name="Pandey A."/>
            <person name="Patil P.B."/>
            <person name="Ishihara H."/>
            <person name="Meyer D.F."/>
            <person name="Szurek B."/>
            <person name="Verdier V."/>
            <person name="Koebnik R."/>
            <person name="Dow J.M."/>
            <person name="Ryan R.P."/>
            <person name="Hirata H."/>
            <person name="Tsuyumu S."/>
            <person name="Won Lee S."/>
            <person name="Seo Y.-S."/>
            <person name="Sriariyanum M."/>
            <person name="Ronald P.C."/>
            <person name="Sonti R.V."/>
            <person name="Van Sluys M.-A."/>
            <person name="Leach J.E."/>
            <person name="White F.F."/>
            <person name="Bogdanove A.J."/>
        </authorList>
    </citation>
    <scope>NUCLEOTIDE SEQUENCE [LARGE SCALE GENOMIC DNA]</scope>
    <source>
        <strain>PXO99A</strain>
    </source>
</reference>
<comment type="function">
    <text evidence="1">Catalyzes the methylthiolation of an aspartic acid residue of ribosomal protein uS12.</text>
</comment>
<comment type="catalytic activity">
    <reaction evidence="1">
        <text>L-aspartate(89)-[ribosomal protein uS12]-hydrogen + (sulfur carrier)-SH + AH2 + 2 S-adenosyl-L-methionine = 3-methylsulfanyl-L-aspartate(89)-[ribosomal protein uS12]-hydrogen + (sulfur carrier)-H + 5'-deoxyadenosine + L-methionine + A + S-adenosyl-L-homocysteine + 2 H(+)</text>
        <dbReference type="Rhea" id="RHEA:37087"/>
        <dbReference type="Rhea" id="RHEA-COMP:10460"/>
        <dbReference type="Rhea" id="RHEA-COMP:10461"/>
        <dbReference type="Rhea" id="RHEA-COMP:14737"/>
        <dbReference type="Rhea" id="RHEA-COMP:14739"/>
        <dbReference type="ChEBI" id="CHEBI:13193"/>
        <dbReference type="ChEBI" id="CHEBI:15378"/>
        <dbReference type="ChEBI" id="CHEBI:17319"/>
        <dbReference type="ChEBI" id="CHEBI:17499"/>
        <dbReference type="ChEBI" id="CHEBI:29917"/>
        <dbReference type="ChEBI" id="CHEBI:29961"/>
        <dbReference type="ChEBI" id="CHEBI:57844"/>
        <dbReference type="ChEBI" id="CHEBI:57856"/>
        <dbReference type="ChEBI" id="CHEBI:59789"/>
        <dbReference type="ChEBI" id="CHEBI:64428"/>
        <dbReference type="ChEBI" id="CHEBI:73599"/>
        <dbReference type="EC" id="2.8.4.4"/>
    </reaction>
</comment>
<comment type="cofactor">
    <cofactor evidence="1">
        <name>[4Fe-4S] cluster</name>
        <dbReference type="ChEBI" id="CHEBI:49883"/>
    </cofactor>
    <text evidence="1">Binds 2 [4Fe-4S] clusters. One cluster is coordinated with 3 cysteines and an exchangeable S-adenosyl-L-methionine.</text>
</comment>
<comment type="subcellular location">
    <subcellularLocation>
        <location evidence="1">Cytoplasm</location>
    </subcellularLocation>
</comment>
<comment type="similarity">
    <text evidence="1">Belongs to the methylthiotransferase family. RimO subfamily.</text>
</comment>
<feature type="chain" id="PRO_0000375076" description="Ribosomal protein uS12 methylthiotransferase RimO">
    <location>
        <begin position="1"/>
        <end position="460"/>
    </location>
</feature>
<feature type="domain" description="MTTase N-terminal" evidence="1">
    <location>
        <begin position="9"/>
        <end position="119"/>
    </location>
</feature>
<feature type="domain" description="Radical SAM core" evidence="2">
    <location>
        <begin position="136"/>
        <end position="374"/>
    </location>
</feature>
<feature type="domain" description="TRAM" evidence="1">
    <location>
        <begin position="376"/>
        <end position="444"/>
    </location>
</feature>
<feature type="binding site" evidence="1">
    <location>
        <position position="18"/>
    </location>
    <ligand>
        <name>[4Fe-4S] cluster</name>
        <dbReference type="ChEBI" id="CHEBI:49883"/>
        <label>1</label>
    </ligand>
</feature>
<feature type="binding site" evidence="1">
    <location>
        <position position="54"/>
    </location>
    <ligand>
        <name>[4Fe-4S] cluster</name>
        <dbReference type="ChEBI" id="CHEBI:49883"/>
        <label>1</label>
    </ligand>
</feature>
<feature type="binding site" evidence="1">
    <location>
        <position position="83"/>
    </location>
    <ligand>
        <name>[4Fe-4S] cluster</name>
        <dbReference type="ChEBI" id="CHEBI:49883"/>
        <label>1</label>
    </ligand>
</feature>
<feature type="binding site" evidence="1">
    <location>
        <position position="150"/>
    </location>
    <ligand>
        <name>[4Fe-4S] cluster</name>
        <dbReference type="ChEBI" id="CHEBI:49883"/>
        <label>2</label>
        <note>4Fe-4S-S-AdoMet</note>
    </ligand>
</feature>
<feature type="binding site" evidence="1">
    <location>
        <position position="154"/>
    </location>
    <ligand>
        <name>[4Fe-4S] cluster</name>
        <dbReference type="ChEBI" id="CHEBI:49883"/>
        <label>2</label>
        <note>4Fe-4S-S-AdoMet</note>
    </ligand>
</feature>
<feature type="binding site" evidence="1">
    <location>
        <position position="157"/>
    </location>
    <ligand>
        <name>[4Fe-4S] cluster</name>
        <dbReference type="ChEBI" id="CHEBI:49883"/>
        <label>2</label>
        <note>4Fe-4S-S-AdoMet</note>
    </ligand>
</feature>
<name>RIMO_XANOP</name>
<protein>
    <recommendedName>
        <fullName evidence="1">Ribosomal protein uS12 methylthiotransferase RimO</fullName>
        <shortName evidence="1">uS12 MTTase</shortName>
        <shortName evidence="1">uS12 methylthiotransferase</shortName>
        <ecNumber evidence="1">2.8.4.4</ecNumber>
    </recommendedName>
    <alternativeName>
        <fullName evidence="1">Ribosomal protein uS12 (aspartate-C(3))-methylthiotransferase</fullName>
    </alternativeName>
    <alternativeName>
        <fullName evidence="1">Ribosome maturation factor RimO</fullName>
    </alternativeName>
</protein>
<gene>
    <name evidence="1" type="primary">rimO</name>
    <name type="ordered locus">PXO_01247</name>
</gene>
<dbReference type="EC" id="2.8.4.4" evidence="1"/>
<dbReference type="EMBL" id="CP000967">
    <property type="protein sequence ID" value="ACD60131.1"/>
    <property type="molecule type" value="Genomic_DNA"/>
</dbReference>
<dbReference type="SMR" id="B2SWC0"/>
<dbReference type="KEGG" id="xop:PXO_01247"/>
<dbReference type="eggNOG" id="COG0621">
    <property type="taxonomic scope" value="Bacteria"/>
</dbReference>
<dbReference type="HOGENOM" id="CLU_018697_0_0_6"/>
<dbReference type="Proteomes" id="UP000001740">
    <property type="component" value="Chromosome"/>
</dbReference>
<dbReference type="GO" id="GO:0005829">
    <property type="term" value="C:cytosol"/>
    <property type="evidence" value="ECO:0007669"/>
    <property type="project" value="TreeGrafter"/>
</dbReference>
<dbReference type="GO" id="GO:0051539">
    <property type="term" value="F:4 iron, 4 sulfur cluster binding"/>
    <property type="evidence" value="ECO:0007669"/>
    <property type="project" value="UniProtKB-UniRule"/>
</dbReference>
<dbReference type="GO" id="GO:0035599">
    <property type="term" value="F:aspartic acid methylthiotransferase activity"/>
    <property type="evidence" value="ECO:0007669"/>
    <property type="project" value="TreeGrafter"/>
</dbReference>
<dbReference type="GO" id="GO:0046872">
    <property type="term" value="F:metal ion binding"/>
    <property type="evidence" value="ECO:0007669"/>
    <property type="project" value="UniProtKB-KW"/>
</dbReference>
<dbReference type="GO" id="GO:0103039">
    <property type="term" value="F:protein methylthiotransferase activity"/>
    <property type="evidence" value="ECO:0007669"/>
    <property type="project" value="UniProtKB-EC"/>
</dbReference>
<dbReference type="GO" id="GO:0006400">
    <property type="term" value="P:tRNA modification"/>
    <property type="evidence" value="ECO:0007669"/>
    <property type="project" value="InterPro"/>
</dbReference>
<dbReference type="CDD" id="cd01335">
    <property type="entry name" value="Radical_SAM"/>
    <property type="match status" value="1"/>
</dbReference>
<dbReference type="FunFam" id="2.40.50.140:FF:000210">
    <property type="entry name" value="Ribosomal protein S12 methylthiotransferase RimO"/>
    <property type="match status" value="1"/>
</dbReference>
<dbReference type="FunFam" id="3.40.50.12160:FF:000002">
    <property type="entry name" value="Ribosomal protein S12 methylthiotransferase RimO"/>
    <property type="match status" value="1"/>
</dbReference>
<dbReference type="FunFam" id="3.80.30.20:FF:000001">
    <property type="entry name" value="tRNA-2-methylthio-N(6)-dimethylallyladenosine synthase 2"/>
    <property type="match status" value="1"/>
</dbReference>
<dbReference type="Gene3D" id="3.40.50.12160">
    <property type="entry name" value="Methylthiotransferase, N-terminal domain"/>
    <property type="match status" value="1"/>
</dbReference>
<dbReference type="Gene3D" id="2.40.50.140">
    <property type="entry name" value="Nucleic acid-binding proteins"/>
    <property type="match status" value="1"/>
</dbReference>
<dbReference type="Gene3D" id="3.80.30.20">
    <property type="entry name" value="tm_1862 like domain"/>
    <property type="match status" value="1"/>
</dbReference>
<dbReference type="HAMAP" id="MF_01865">
    <property type="entry name" value="MTTase_RimO"/>
    <property type="match status" value="1"/>
</dbReference>
<dbReference type="InterPro" id="IPR006638">
    <property type="entry name" value="Elp3/MiaA/NifB-like_rSAM"/>
</dbReference>
<dbReference type="InterPro" id="IPR005839">
    <property type="entry name" value="Methylthiotransferase"/>
</dbReference>
<dbReference type="InterPro" id="IPR020612">
    <property type="entry name" value="Methylthiotransferase_CS"/>
</dbReference>
<dbReference type="InterPro" id="IPR013848">
    <property type="entry name" value="Methylthiotransferase_N"/>
</dbReference>
<dbReference type="InterPro" id="IPR038135">
    <property type="entry name" value="Methylthiotransferase_N_sf"/>
</dbReference>
<dbReference type="InterPro" id="IPR012340">
    <property type="entry name" value="NA-bd_OB-fold"/>
</dbReference>
<dbReference type="InterPro" id="IPR005840">
    <property type="entry name" value="Ribosomal_uS12_MeSTrfase_RimO"/>
</dbReference>
<dbReference type="InterPro" id="IPR007197">
    <property type="entry name" value="rSAM"/>
</dbReference>
<dbReference type="InterPro" id="IPR023404">
    <property type="entry name" value="rSAM_horseshoe"/>
</dbReference>
<dbReference type="InterPro" id="IPR002792">
    <property type="entry name" value="TRAM_dom"/>
</dbReference>
<dbReference type="NCBIfam" id="TIGR01125">
    <property type="entry name" value="30S ribosomal protein S12 methylthiotransferase RimO"/>
    <property type="match status" value="1"/>
</dbReference>
<dbReference type="NCBIfam" id="TIGR00089">
    <property type="entry name" value="MiaB/RimO family radical SAM methylthiotransferase"/>
    <property type="match status" value="1"/>
</dbReference>
<dbReference type="PANTHER" id="PTHR43837">
    <property type="entry name" value="RIBOSOMAL PROTEIN S12 METHYLTHIOTRANSFERASE RIMO"/>
    <property type="match status" value="1"/>
</dbReference>
<dbReference type="PANTHER" id="PTHR43837:SF1">
    <property type="entry name" value="RIBOSOMAL PROTEIN US12 METHYLTHIOTRANSFERASE RIMO"/>
    <property type="match status" value="1"/>
</dbReference>
<dbReference type="Pfam" id="PF04055">
    <property type="entry name" value="Radical_SAM"/>
    <property type="match status" value="1"/>
</dbReference>
<dbReference type="Pfam" id="PF18693">
    <property type="entry name" value="TRAM_2"/>
    <property type="match status" value="1"/>
</dbReference>
<dbReference type="Pfam" id="PF00919">
    <property type="entry name" value="UPF0004"/>
    <property type="match status" value="1"/>
</dbReference>
<dbReference type="SFLD" id="SFLDG01082">
    <property type="entry name" value="B12-binding_domain_containing"/>
    <property type="match status" value="1"/>
</dbReference>
<dbReference type="SFLD" id="SFLDG01061">
    <property type="entry name" value="methylthiotransferase"/>
    <property type="match status" value="1"/>
</dbReference>
<dbReference type="SFLD" id="SFLDF00274">
    <property type="entry name" value="ribosomal_protein_S12_methylth"/>
    <property type="match status" value="1"/>
</dbReference>
<dbReference type="SMART" id="SM00729">
    <property type="entry name" value="Elp3"/>
    <property type="match status" value="1"/>
</dbReference>
<dbReference type="SUPFAM" id="SSF102114">
    <property type="entry name" value="Radical SAM enzymes"/>
    <property type="match status" value="1"/>
</dbReference>
<dbReference type="PROSITE" id="PS51449">
    <property type="entry name" value="MTTASE_N"/>
    <property type="match status" value="1"/>
</dbReference>
<dbReference type="PROSITE" id="PS01278">
    <property type="entry name" value="MTTASE_RADICAL"/>
    <property type="match status" value="1"/>
</dbReference>
<dbReference type="PROSITE" id="PS51918">
    <property type="entry name" value="RADICAL_SAM"/>
    <property type="match status" value="1"/>
</dbReference>
<dbReference type="PROSITE" id="PS50926">
    <property type="entry name" value="TRAM"/>
    <property type="match status" value="1"/>
</dbReference>
<accession>B2SWC0</accession>
<evidence type="ECO:0000255" key="1">
    <source>
        <dbReference type="HAMAP-Rule" id="MF_01865"/>
    </source>
</evidence>
<evidence type="ECO:0000255" key="2">
    <source>
        <dbReference type="PROSITE-ProRule" id="PRU01266"/>
    </source>
</evidence>